<name>IAFRS_STRMQ</name>
<dbReference type="EC" id="4.2.3.157" evidence="3"/>
<dbReference type="EMBL" id="CP023992">
    <property type="protein sequence ID" value="ATL80951.1"/>
    <property type="molecule type" value="Genomic_DNA"/>
</dbReference>
<dbReference type="EMBL" id="CP029823">
    <property type="protein sequence ID" value="QDL74490.1"/>
    <property type="molecule type" value="Genomic_DNA"/>
</dbReference>
<dbReference type="RefSeq" id="WP_099012731.1">
    <property type="nucleotide sequence ID" value="NZ_CP023992.1"/>
</dbReference>
<dbReference type="SMR" id="A0A291SJC7"/>
<dbReference type="KEGG" id="smal:SMALA_0716"/>
<dbReference type="GO" id="GO:0046872">
    <property type="term" value="F:metal ion binding"/>
    <property type="evidence" value="ECO:0007669"/>
    <property type="project" value="UniProtKB-KW"/>
</dbReference>
<dbReference type="GO" id="GO:0010333">
    <property type="term" value="F:terpene synthase activity"/>
    <property type="evidence" value="ECO:0007669"/>
    <property type="project" value="InterPro"/>
</dbReference>
<dbReference type="Gene3D" id="1.10.600.10">
    <property type="entry name" value="Farnesyl Diphosphate Synthase"/>
    <property type="match status" value="1"/>
</dbReference>
<dbReference type="InterPro" id="IPR048128">
    <property type="entry name" value="Isoafr/prist_syn"/>
</dbReference>
<dbReference type="InterPro" id="IPR008949">
    <property type="entry name" value="Isoprenoid_synthase_dom_sf"/>
</dbReference>
<dbReference type="InterPro" id="IPR034686">
    <property type="entry name" value="Terpene_cyclase-like_2"/>
</dbReference>
<dbReference type="NCBIfam" id="NF041624">
    <property type="entry name" value="isoafr_syn"/>
    <property type="match status" value="1"/>
</dbReference>
<dbReference type="PANTHER" id="PTHR35201:SF4">
    <property type="entry name" value="BETA-PINACENE SYNTHASE-RELATED"/>
    <property type="match status" value="1"/>
</dbReference>
<dbReference type="PANTHER" id="PTHR35201">
    <property type="entry name" value="TERPENE SYNTHASE"/>
    <property type="match status" value="1"/>
</dbReference>
<dbReference type="Pfam" id="PF19086">
    <property type="entry name" value="Terpene_syn_C_2"/>
    <property type="match status" value="1"/>
</dbReference>
<dbReference type="SFLD" id="SFLDS00005">
    <property type="entry name" value="Isoprenoid_Synthase_Type_I"/>
    <property type="match status" value="1"/>
</dbReference>
<dbReference type="SFLD" id="SFLDG01020">
    <property type="entry name" value="Terpene_Cyclase_Like_2"/>
    <property type="match status" value="1"/>
</dbReference>
<dbReference type="SUPFAM" id="SSF48576">
    <property type="entry name" value="Terpenoid synthases"/>
    <property type="match status" value="1"/>
</dbReference>
<proteinExistence type="evidence at protein level"/>
<protein>
    <recommendedName>
        <fullName evidence="4">Isoafricanol synthase</fullName>
        <ecNumber evidence="3">4.2.3.157</ecNumber>
    </recommendedName>
</protein>
<feature type="chain" id="PRO_0000449805" description="Isoafricanol synthase">
    <location>
        <begin position="1"/>
        <end position="395"/>
    </location>
</feature>
<feature type="region of interest" description="Disordered" evidence="2">
    <location>
        <begin position="346"/>
        <end position="395"/>
    </location>
</feature>
<feature type="compositionally biased region" description="Basic and acidic residues" evidence="2">
    <location>
        <begin position="346"/>
        <end position="357"/>
    </location>
</feature>
<feature type="binding site" evidence="1">
    <location>
        <position position="95"/>
    </location>
    <ligand>
        <name>Mg(2+)</name>
        <dbReference type="ChEBI" id="CHEBI:18420"/>
        <label>1</label>
    </ligand>
</feature>
<feature type="binding site" evidence="1">
    <location>
        <position position="95"/>
    </location>
    <ligand>
        <name>Mg(2+)</name>
        <dbReference type="ChEBI" id="CHEBI:18420"/>
        <label>2</label>
    </ligand>
</feature>
<feature type="binding site" evidence="1">
    <location>
        <position position="246"/>
    </location>
    <ligand>
        <name>Mg(2+)</name>
        <dbReference type="ChEBI" id="CHEBI:18420"/>
        <label>3</label>
    </ligand>
</feature>
<feature type="binding site" evidence="1">
    <location>
        <position position="250"/>
    </location>
    <ligand>
        <name>Mg(2+)</name>
        <dbReference type="ChEBI" id="CHEBI:18420"/>
        <label>3</label>
    </ligand>
</feature>
<feature type="binding site" evidence="1">
    <location>
        <position position="254"/>
    </location>
    <ligand>
        <name>Mg(2+)</name>
        <dbReference type="ChEBI" id="CHEBI:18420"/>
        <label>3</label>
    </ligand>
</feature>
<keyword id="KW-0456">Lyase</keyword>
<keyword id="KW-0460">Magnesium</keyword>
<keyword id="KW-0479">Metal-binding</keyword>
<gene>
    <name evidence="7" type="ORF">DNK48_39945</name>
    <name evidence="6" type="ORF">SMALA_0716</name>
</gene>
<sequence>MHTHASRPHARQSALPRRAALFDFPASADLSPDTGAARQHTIQWLSRFRVFENHASVEEYDALRFDVLTGLFYPRATGADLNLGSDLVGWYFVFDDQFDGELGCRPEEVARLVADVIRVTEEDMAPGGTGGGEGPLLESFRDLWHRINSGRPRVWRDRFRHHWLEYLHSYHREALERTGAAPADGGGDAPRSVEDVLALRRHSIGVQPCLDLNEPFGGYTLPSALHGGFPLARMREATDDVVVFTNDIASLDKELAVGDVHNSVIVQWKLAGGGVEDAVRHIAGLANARYGWFEETAARLPELLAEAGADPGTHRAVGRYVDGMRHVMTGNLGWSLRTARYDERGTEAVSGGRERPWARLTGAEDLIRAGRGAPPPPGSGPDTRQPMPSEPSQLA</sequence>
<organism>
    <name type="scientific">Streptomyces malaysiensis</name>
    <dbReference type="NCBI Taxonomy" id="92644"/>
    <lineage>
        <taxon>Bacteria</taxon>
        <taxon>Bacillati</taxon>
        <taxon>Actinomycetota</taxon>
        <taxon>Actinomycetes</taxon>
        <taxon>Kitasatosporales</taxon>
        <taxon>Streptomycetaceae</taxon>
        <taxon>Streptomyces</taxon>
        <taxon>Streptomyces violaceusniger group</taxon>
    </lineage>
</organism>
<evidence type="ECO:0000250" key="1">
    <source>
        <dbReference type="UniProtKB" id="B5GMG2"/>
    </source>
</evidence>
<evidence type="ECO:0000256" key="2">
    <source>
        <dbReference type="SAM" id="MobiDB-lite"/>
    </source>
</evidence>
<evidence type="ECO:0000269" key="3">
    <source>
    </source>
</evidence>
<evidence type="ECO:0000303" key="4">
    <source>
    </source>
</evidence>
<evidence type="ECO:0000305" key="5"/>
<evidence type="ECO:0000312" key="6">
    <source>
        <dbReference type="EMBL" id="ATL80951.1"/>
    </source>
</evidence>
<evidence type="ECO:0000312" key="7">
    <source>
        <dbReference type="EMBL" id="QDL74490.1"/>
    </source>
</evidence>
<accession>A0A291SJC7</accession>
<comment type="function">
    <text evidence="3">Catalyzes the cyclization of farnesyl diphosphate (FPP) to isoafricanol.</text>
</comment>
<comment type="catalytic activity">
    <reaction evidence="3">
        <text>(2E,6E)-farnesyl diphosphate + H2O = (+)-isoafricanol + diphosphate</text>
        <dbReference type="Rhea" id="RHEA:53616"/>
        <dbReference type="ChEBI" id="CHEBI:15377"/>
        <dbReference type="ChEBI" id="CHEBI:33019"/>
        <dbReference type="ChEBI" id="CHEBI:137522"/>
        <dbReference type="ChEBI" id="CHEBI:175763"/>
        <dbReference type="EC" id="4.2.3.157"/>
    </reaction>
</comment>
<comment type="cofactor">
    <cofactor evidence="1">
        <name>Mg(2+)</name>
        <dbReference type="ChEBI" id="CHEBI:18420"/>
    </cofactor>
    <text evidence="1">Binds 3 Mg(2+) ions per subunit.</text>
</comment>
<comment type="similarity">
    <text evidence="5">Belongs to the terpene synthase family.</text>
</comment>
<reference key="1">
    <citation type="submission" date="2017-10" db="EMBL/GenBank/DDBJ databases">
        <title>Deciphering the complete genome sequence of Streptomyces malaysiensis DSM4137, an unusually prolific producer of assembly-line natural product antibiotics.</title>
        <authorList>
            <person name="Samborskyy M."/>
            <person name="Dickens S."/>
            <person name="Scott N."/>
            <person name="Haydock S."/>
            <person name="Leadlay P."/>
        </authorList>
    </citation>
    <scope>NUCLEOTIDE SEQUENCE [LARGE SCALE GENOMIC DNA]</scope>
    <source>
        <strain>DSM 4137</strain>
    </source>
</reference>
<reference key="2">
    <citation type="submission" date="2018-06" db="EMBL/GenBank/DDBJ databases">
        <authorList>
            <person name="Robison K.E."/>
        </authorList>
    </citation>
    <scope>NUCLEOTIDE SEQUENCE [LARGE SCALE GENOMIC DNA]</scope>
    <source>
        <strain>DSM 4137</strain>
    </source>
</reference>
<reference key="3">
    <citation type="journal article" date="2017" name="Org. Biomol. Chem.">
        <title>Isoafricanol synthase from Streptomyces malaysiensis.</title>
        <authorList>
            <person name="Rabe P."/>
            <person name="Samborskyy M."/>
            <person name="Leadlay P.F."/>
            <person name="Dickschat J.S."/>
        </authorList>
    </citation>
    <scope>FUNCTION</scope>
    <scope>CATALYTIC ACTIVITY</scope>
    <source>
        <strain>DSM 4137</strain>
    </source>
</reference>